<accession>C0HKS0</accession>
<name>ALLC_AGRIP</name>
<organism>
    <name type="scientific">Agrotis ipsilon</name>
    <name type="common">Black cutworm moth</name>
    <dbReference type="NCBI Taxonomy" id="56364"/>
    <lineage>
        <taxon>Eukaryota</taxon>
        <taxon>Metazoa</taxon>
        <taxon>Ecdysozoa</taxon>
        <taxon>Arthropoda</taxon>
        <taxon>Hexapoda</taxon>
        <taxon>Insecta</taxon>
        <taxon>Pterygota</taxon>
        <taxon>Neoptera</taxon>
        <taxon>Endopterygota</taxon>
        <taxon>Lepidoptera</taxon>
        <taxon>Glossata</taxon>
        <taxon>Ditrysia</taxon>
        <taxon>Noctuoidea</taxon>
        <taxon>Noctuidae</taxon>
        <taxon>Noctuinae</taxon>
        <taxon>Noctuini</taxon>
        <taxon>Agrotis</taxon>
    </lineage>
</organism>
<keyword id="KW-0165">Cleavage on pair of basic residues</keyword>
<keyword id="KW-0903">Direct protein sequencing</keyword>
<keyword id="KW-0527">Neuropeptide</keyword>
<keyword id="KW-0873">Pyrrolidone carboxylic acid</keyword>
<keyword id="KW-0964">Secreted</keyword>
<feature type="propeptide" id="PRO_0000444515" evidence="4">
    <location>
        <begin position="1"/>
        <end position="19"/>
    </location>
</feature>
<feature type="peptide" id="PRO_0000444516" description="Allatostatin-C" evidence="2">
    <location>
        <begin position="22"/>
        <end position="36"/>
    </location>
</feature>
<feature type="modified residue" description="Pyrrolidone carboxylic acid; partial" evidence="2">
    <location>
        <position position="22"/>
    </location>
</feature>
<evidence type="ECO:0000250" key="1">
    <source>
        <dbReference type="UniProtKB" id="P42559"/>
    </source>
</evidence>
<evidence type="ECO:0000269" key="2">
    <source>
    </source>
</evidence>
<evidence type="ECO:0000303" key="3">
    <source>
    </source>
</evidence>
<evidence type="ECO:0000305" key="4"/>
<protein>
    <recommendedName>
        <fullName evidence="3">Allatostatin-C</fullName>
    </recommendedName>
</protein>
<proteinExistence type="evidence at protein level"/>
<reference evidence="4" key="1">
    <citation type="journal article" date="2018" name="J. Proteome Res.">
        <title>Mating-induced differential peptidomics of neuropeptides and protein hormones in Agrotis ipsilon moths.</title>
        <authorList>
            <person name="Diesner M."/>
            <person name="Gallot A."/>
            <person name="Binz H."/>
            <person name="Gaertner C."/>
            <person name="Vitecek S."/>
            <person name="Kahnt J."/>
            <person name="Schachtner J."/>
            <person name="Jacquin-Joly E."/>
            <person name="Gadenne C."/>
        </authorList>
    </citation>
    <scope>NUCLEOTIDE SEQUENCE [MRNA]</scope>
    <scope>PROTEIN SEQUENCE OF 22-36</scope>
    <scope>TISSUE SPECIFICITY</scope>
    <scope>MASS SPECTROMETRY</scope>
    <scope>IDENTIFICATION BY MASS SPECTROMETRY</scope>
    <scope>PYROGLUTAMATE FORMATION AT GLN-22</scope>
</reference>
<comment type="function">
    <text evidence="1">Strongly inhibits juvenile hormone biosynthesis.</text>
</comment>
<comment type="subcellular location">
    <subcellularLocation>
        <location evidence="4">Secreted</location>
    </subcellularLocation>
</comment>
<comment type="tissue specificity">
    <text evidence="2">In its non-pyroglutamate form, expressed in antennal lobe (AL), corpora cardiaca (CC), corpora allata (CA) and gnathal ganglion (GNG) with expression in AL detected in most animals and expression in CC, CA and GNG detected in few animals (at protein level). In its pyroglutamate form, expressed in antennal lobe (AL), corpora cardiaca (CC) and corpora allata (CA) with expression detected in few animals (at protein level). Not expressed in GNG (protein level).</text>
</comment>
<comment type="mass spectrometry" mass="1905.89" method="MALDI" evidence="2">
    <text>Non-pyroglutamate form.</text>
</comment>
<comment type="mass spectrometry" mass="1888.89" method="MALDI" evidence="2">
    <text>Pyroglutamate form.</text>
</comment>
<comment type="similarity">
    <text evidence="4">Belongs to the allatostatin family.</text>
</comment>
<dbReference type="SMR" id="C0HKS0"/>
<dbReference type="GO" id="GO:0005576">
    <property type="term" value="C:extracellular region"/>
    <property type="evidence" value="ECO:0007669"/>
    <property type="project" value="UniProtKB-SubCell"/>
</dbReference>
<dbReference type="GO" id="GO:0007218">
    <property type="term" value="P:neuropeptide signaling pathway"/>
    <property type="evidence" value="ECO:0007669"/>
    <property type="project" value="UniProtKB-KW"/>
</dbReference>
<sequence length="38" mass="4492">MRRALDGPGSSSLDTRQADKRQVRFRQCYFNPISCFRK</sequence>